<protein>
    <recommendedName>
        <fullName evidence="1">3-dehydroquinate synthase</fullName>
        <shortName evidence="1">DHQS</shortName>
        <ecNumber evidence="1">4.2.3.4</ecNumber>
    </recommendedName>
</protein>
<dbReference type="EC" id="4.2.3.4" evidence="1"/>
<dbReference type="EMBL" id="U88628">
    <property type="protein sequence ID" value="AAB71614.1"/>
    <property type="molecule type" value="Genomic_DNA"/>
</dbReference>
<dbReference type="EMBL" id="CP001829">
    <property type="protein sequence ID" value="ADL10614.1"/>
    <property type="molecule type" value="Genomic_DNA"/>
</dbReference>
<dbReference type="RefSeq" id="WP_014367126.1">
    <property type="nucleotide sequence ID" value="NC_017301.2"/>
</dbReference>
<dbReference type="SMR" id="P96749"/>
<dbReference type="STRING" id="681645.CpC231_1138"/>
<dbReference type="GeneID" id="93974508"/>
<dbReference type="KEGG" id="cpq:CPC231_05760"/>
<dbReference type="PATRIC" id="fig|681645.3.peg.1191"/>
<dbReference type="eggNOG" id="COG0337">
    <property type="taxonomic scope" value="Bacteria"/>
</dbReference>
<dbReference type="HOGENOM" id="CLU_001201_0_3_11"/>
<dbReference type="OrthoDB" id="9806583at2"/>
<dbReference type="UniPathway" id="UPA00053">
    <property type="reaction ID" value="UER00085"/>
</dbReference>
<dbReference type="Proteomes" id="UP000000276">
    <property type="component" value="Chromosome"/>
</dbReference>
<dbReference type="GO" id="GO:0005737">
    <property type="term" value="C:cytoplasm"/>
    <property type="evidence" value="ECO:0007669"/>
    <property type="project" value="UniProtKB-SubCell"/>
</dbReference>
<dbReference type="GO" id="GO:0003856">
    <property type="term" value="F:3-dehydroquinate synthase activity"/>
    <property type="evidence" value="ECO:0007669"/>
    <property type="project" value="UniProtKB-UniRule"/>
</dbReference>
<dbReference type="GO" id="GO:0046872">
    <property type="term" value="F:metal ion binding"/>
    <property type="evidence" value="ECO:0007669"/>
    <property type="project" value="UniProtKB-KW"/>
</dbReference>
<dbReference type="GO" id="GO:0000166">
    <property type="term" value="F:nucleotide binding"/>
    <property type="evidence" value="ECO:0007669"/>
    <property type="project" value="UniProtKB-KW"/>
</dbReference>
<dbReference type="GO" id="GO:0008652">
    <property type="term" value="P:amino acid biosynthetic process"/>
    <property type="evidence" value="ECO:0007669"/>
    <property type="project" value="UniProtKB-KW"/>
</dbReference>
<dbReference type="GO" id="GO:0009073">
    <property type="term" value="P:aromatic amino acid family biosynthetic process"/>
    <property type="evidence" value="ECO:0007669"/>
    <property type="project" value="UniProtKB-KW"/>
</dbReference>
<dbReference type="GO" id="GO:0009423">
    <property type="term" value="P:chorismate biosynthetic process"/>
    <property type="evidence" value="ECO:0007669"/>
    <property type="project" value="UniProtKB-UniRule"/>
</dbReference>
<dbReference type="CDD" id="cd08195">
    <property type="entry name" value="DHQS"/>
    <property type="match status" value="1"/>
</dbReference>
<dbReference type="FunFam" id="3.40.50.1970:FF:000007">
    <property type="entry name" value="Pentafunctional AROM polypeptide"/>
    <property type="match status" value="1"/>
</dbReference>
<dbReference type="Gene3D" id="3.40.50.1970">
    <property type="match status" value="1"/>
</dbReference>
<dbReference type="Gene3D" id="1.20.1090.10">
    <property type="entry name" value="Dehydroquinate synthase-like - alpha domain"/>
    <property type="match status" value="1"/>
</dbReference>
<dbReference type="HAMAP" id="MF_00110">
    <property type="entry name" value="DHQ_synthase"/>
    <property type="match status" value="1"/>
</dbReference>
<dbReference type="InterPro" id="IPR050071">
    <property type="entry name" value="Dehydroquinate_synthase"/>
</dbReference>
<dbReference type="InterPro" id="IPR016037">
    <property type="entry name" value="DHQ_synth_AroB"/>
</dbReference>
<dbReference type="InterPro" id="IPR030963">
    <property type="entry name" value="DHQ_synth_fam"/>
</dbReference>
<dbReference type="InterPro" id="IPR030960">
    <property type="entry name" value="DHQS/DOIS_N"/>
</dbReference>
<dbReference type="InterPro" id="IPR056179">
    <property type="entry name" value="DHQS_C"/>
</dbReference>
<dbReference type="NCBIfam" id="TIGR01357">
    <property type="entry name" value="aroB"/>
    <property type="match status" value="1"/>
</dbReference>
<dbReference type="PANTHER" id="PTHR43622">
    <property type="entry name" value="3-DEHYDROQUINATE SYNTHASE"/>
    <property type="match status" value="1"/>
</dbReference>
<dbReference type="PANTHER" id="PTHR43622:SF7">
    <property type="entry name" value="3-DEHYDROQUINATE SYNTHASE, CHLOROPLASTIC"/>
    <property type="match status" value="1"/>
</dbReference>
<dbReference type="Pfam" id="PF01761">
    <property type="entry name" value="DHQ_synthase"/>
    <property type="match status" value="1"/>
</dbReference>
<dbReference type="Pfam" id="PF24621">
    <property type="entry name" value="DHQS_C"/>
    <property type="match status" value="1"/>
</dbReference>
<dbReference type="PIRSF" id="PIRSF001455">
    <property type="entry name" value="DHQ_synth"/>
    <property type="match status" value="1"/>
</dbReference>
<dbReference type="SUPFAM" id="SSF56796">
    <property type="entry name" value="Dehydroquinate synthase-like"/>
    <property type="match status" value="1"/>
</dbReference>
<proteinExistence type="inferred from homology"/>
<sequence>MQTIEVNGASPYEVTIGHNLFKDVAKSMSQLGANQAAIITQPVMGETAKKLVGAIEALGKEATIITVPDAEDGKNLNVAGDCWDVLGRKAFGRKDVIISLGGGAVTDLAGFVAACWMRGIAVIHVPTTLLSMVDAAVGGKTGINTSAGKNLVGAFHEPSGVFIDLDMIATLPDREKISGSAEIIKTGFIADTKILSLYEEDPEACFNVEGYLPELIARSVAVKARVVASDLREAGQREILNYGHTFGHAVELKEKYEWRHGNAVSVGMMFVAALARNRGLITDELYLRHKNILSSVGLPTTYPEGHFAELYQAMLRDKKNRDGRIRFVALIGAGKTIRIEDADRAELIAAYETLNKGGV</sequence>
<name>AROB_CORP2</name>
<reference key="1">
    <citation type="journal article" date="1997" name="Infect. Immun.">
        <title>Attenuation and vaccine potential of aroQ mutants of Corynebacterium pseudotuberculosis.</title>
        <authorList>
            <person name="Simmons C.P."/>
            <person name="Hodgson A.L.M."/>
            <person name="Strugnell R.A."/>
        </authorList>
    </citation>
    <scope>NUCLEOTIDE SEQUENCE [GENOMIC DNA]</scope>
    <source>
        <strain>C231</strain>
    </source>
</reference>
<reference key="2">
    <citation type="journal article" date="2011" name="PLoS ONE">
        <title>Evidence for reductive genome evolution and lateral acquisition of virulence functions in two Corynebacterium pseudotuberculosis strains.</title>
        <authorList>
            <person name="Ruiz J.C."/>
            <person name="D'Afonseca V."/>
            <person name="Silva A."/>
            <person name="Ali A."/>
            <person name="Pinto A.C."/>
            <person name="Santos A.R."/>
            <person name="Rocha A.A."/>
            <person name="Lopes D.O."/>
            <person name="Dorella F.A."/>
            <person name="Pacheco L.G."/>
            <person name="Costa M.P."/>
            <person name="Turk M.Z."/>
            <person name="Seyffert N."/>
            <person name="Moraes P.M."/>
            <person name="Soares S.C."/>
            <person name="Almeida S.S."/>
            <person name="Castro T.L."/>
            <person name="Abreu V.A."/>
            <person name="Trost E."/>
            <person name="Baumbach J."/>
            <person name="Tauch A."/>
            <person name="Schneider M.P."/>
            <person name="McCulloch J."/>
            <person name="Cerdeira L.T."/>
            <person name="Ramos R.T."/>
            <person name="Zerlotini A."/>
            <person name="Dominitini A."/>
            <person name="Resende D.M."/>
            <person name="Coser E.M."/>
            <person name="Oliveira L.M."/>
            <person name="Pedrosa A.L."/>
            <person name="Vieira C.U."/>
            <person name="Guimaraes C.T."/>
            <person name="Bartholomeu D.C."/>
            <person name="Oliveira D.M."/>
            <person name="Santos F.R."/>
            <person name="Rabelo E.M."/>
            <person name="Lobo F.P."/>
            <person name="Franco G.R."/>
            <person name="Costa A.F."/>
            <person name="Castro I.M."/>
            <person name="Dias S.R."/>
            <person name="Ferro J.A."/>
            <person name="Ortega J.M."/>
            <person name="Paiva L.V."/>
            <person name="Goulart L.R."/>
            <person name="Almeida J.F."/>
            <person name="Ferro M.I."/>
            <person name="Carneiro N.P."/>
            <person name="Falcao P.R."/>
            <person name="Grynberg P."/>
            <person name="Teixeira S.M."/>
            <person name="Brommonschenkel S."/>
            <person name="Oliveira S.C."/>
            <person name="Meyer R."/>
            <person name="Moore R.J."/>
            <person name="Miyoshi A."/>
            <person name="Oliveira G.C."/>
            <person name="Azevedo V."/>
        </authorList>
    </citation>
    <scope>NUCLEOTIDE SEQUENCE [LARGE SCALE GENOMIC DNA]</scope>
    <source>
        <strain>C231</strain>
    </source>
</reference>
<gene>
    <name evidence="1" type="primary">aroB</name>
    <name type="ordered locus">CpC231_1138</name>
</gene>
<accession>P96749</accession>
<accession>D9QAN8</accession>
<feature type="chain" id="PRO_0000140735" description="3-dehydroquinate synthase">
    <location>
        <begin position="1"/>
        <end position="359"/>
    </location>
</feature>
<feature type="binding site" evidence="1">
    <location>
        <begin position="69"/>
        <end position="74"/>
    </location>
    <ligand>
        <name>NAD(+)</name>
        <dbReference type="ChEBI" id="CHEBI:57540"/>
    </ligand>
</feature>
<feature type="binding site" evidence="1">
    <location>
        <begin position="103"/>
        <end position="107"/>
    </location>
    <ligand>
        <name>NAD(+)</name>
        <dbReference type="ChEBI" id="CHEBI:57540"/>
    </ligand>
</feature>
<feature type="binding site" evidence="1">
    <location>
        <begin position="127"/>
        <end position="128"/>
    </location>
    <ligand>
        <name>NAD(+)</name>
        <dbReference type="ChEBI" id="CHEBI:57540"/>
    </ligand>
</feature>
<feature type="binding site" evidence="1">
    <location>
        <position position="140"/>
    </location>
    <ligand>
        <name>NAD(+)</name>
        <dbReference type="ChEBI" id="CHEBI:57540"/>
    </ligand>
</feature>
<feature type="binding site" evidence="1">
    <location>
        <position position="149"/>
    </location>
    <ligand>
        <name>NAD(+)</name>
        <dbReference type="ChEBI" id="CHEBI:57540"/>
    </ligand>
</feature>
<feature type="binding site" evidence="1">
    <location>
        <position position="182"/>
    </location>
    <ligand>
        <name>Zn(2+)</name>
        <dbReference type="ChEBI" id="CHEBI:29105"/>
    </ligand>
</feature>
<feature type="binding site" evidence="1">
    <location>
        <position position="244"/>
    </location>
    <ligand>
        <name>Zn(2+)</name>
        <dbReference type="ChEBI" id="CHEBI:29105"/>
    </ligand>
</feature>
<feature type="binding site" evidence="1">
    <location>
        <position position="260"/>
    </location>
    <ligand>
        <name>Zn(2+)</name>
        <dbReference type="ChEBI" id="CHEBI:29105"/>
    </ligand>
</feature>
<feature type="sequence conflict" description="In Ref. 1; AAB71614." evidence="2" ref="1">
    <original>VEGYLP</original>
    <variation>GRILA</variation>
    <location>
        <begin position="208"/>
        <end position="213"/>
    </location>
</feature>
<feature type="sequence conflict" description="In Ref. 1; AAB71614." evidence="2" ref="1">
    <original>A</original>
    <variation>G</variation>
    <location>
        <position position="217"/>
    </location>
</feature>
<feature type="sequence conflict" description="In Ref. 1; AAB71614." evidence="2" ref="1">
    <original>V</original>
    <variation>A</variation>
    <location>
        <position position="222"/>
    </location>
</feature>
<feature type="sequence conflict" description="In Ref. 1; AAB71614." evidence="2" ref="1">
    <original>G</original>
    <variation>D</variation>
    <location>
        <position position="323"/>
    </location>
</feature>
<keyword id="KW-0028">Amino-acid biosynthesis</keyword>
<keyword id="KW-0057">Aromatic amino acid biosynthesis</keyword>
<keyword id="KW-0170">Cobalt</keyword>
<keyword id="KW-0963">Cytoplasm</keyword>
<keyword id="KW-0456">Lyase</keyword>
<keyword id="KW-0479">Metal-binding</keyword>
<keyword id="KW-0520">NAD</keyword>
<keyword id="KW-0547">Nucleotide-binding</keyword>
<keyword id="KW-1185">Reference proteome</keyword>
<keyword id="KW-0862">Zinc</keyword>
<comment type="function">
    <text evidence="1">Catalyzes the conversion of 3-deoxy-D-arabino-heptulosonate 7-phosphate (DAHP) to dehydroquinate (DHQ).</text>
</comment>
<comment type="catalytic activity">
    <reaction evidence="1">
        <text>7-phospho-2-dehydro-3-deoxy-D-arabino-heptonate = 3-dehydroquinate + phosphate</text>
        <dbReference type="Rhea" id="RHEA:21968"/>
        <dbReference type="ChEBI" id="CHEBI:32364"/>
        <dbReference type="ChEBI" id="CHEBI:43474"/>
        <dbReference type="ChEBI" id="CHEBI:58394"/>
        <dbReference type="EC" id="4.2.3.4"/>
    </reaction>
</comment>
<comment type="cofactor">
    <cofactor evidence="1">
        <name>NAD(+)</name>
        <dbReference type="ChEBI" id="CHEBI:57540"/>
    </cofactor>
</comment>
<comment type="cofactor">
    <cofactor evidence="1">
        <name>Co(2+)</name>
        <dbReference type="ChEBI" id="CHEBI:48828"/>
    </cofactor>
    <cofactor evidence="1">
        <name>Zn(2+)</name>
        <dbReference type="ChEBI" id="CHEBI:29105"/>
    </cofactor>
    <text evidence="1">Binds 1 divalent metal cation per subunit. Can use either Co(2+) or Zn(2+).</text>
</comment>
<comment type="pathway">
    <text evidence="1">Metabolic intermediate biosynthesis; chorismate biosynthesis; chorismate from D-erythrose 4-phosphate and phosphoenolpyruvate: step 2/7.</text>
</comment>
<comment type="subcellular location">
    <subcellularLocation>
        <location evidence="1">Cytoplasm</location>
    </subcellularLocation>
</comment>
<comment type="similarity">
    <text evidence="1 2">Belongs to the sugar phosphate cyclases superfamily. Dehydroquinate synthase family.</text>
</comment>
<organism>
    <name type="scientific">Corynebacterium pseudotuberculosis (strain C231)</name>
    <dbReference type="NCBI Taxonomy" id="681645"/>
    <lineage>
        <taxon>Bacteria</taxon>
        <taxon>Bacillati</taxon>
        <taxon>Actinomycetota</taxon>
        <taxon>Actinomycetes</taxon>
        <taxon>Mycobacteriales</taxon>
        <taxon>Corynebacteriaceae</taxon>
        <taxon>Corynebacterium</taxon>
    </lineage>
</organism>
<evidence type="ECO:0000255" key="1">
    <source>
        <dbReference type="HAMAP-Rule" id="MF_00110"/>
    </source>
</evidence>
<evidence type="ECO:0000305" key="2"/>